<organism>
    <name type="scientific">Bacillus cereus (strain ATCC 14579 / DSM 31 / CCUG 7414 / JCM 2152 / NBRC 15305 / NCIMB 9373 / NCTC 2599 / NRRL B-3711)</name>
    <dbReference type="NCBI Taxonomy" id="226900"/>
    <lineage>
        <taxon>Bacteria</taxon>
        <taxon>Bacillati</taxon>
        <taxon>Bacillota</taxon>
        <taxon>Bacilli</taxon>
        <taxon>Bacillales</taxon>
        <taxon>Bacillaceae</taxon>
        <taxon>Bacillus</taxon>
        <taxon>Bacillus cereus group</taxon>
    </lineage>
</organism>
<evidence type="ECO:0000255" key="1">
    <source>
        <dbReference type="HAMAP-Rule" id="MF_00110"/>
    </source>
</evidence>
<dbReference type="EC" id="4.2.3.4" evidence="1"/>
<dbReference type="EMBL" id="AE016877">
    <property type="protein sequence ID" value="AAP08497.1"/>
    <property type="molecule type" value="Genomic_DNA"/>
</dbReference>
<dbReference type="RefSeq" id="NP_831296.1">
    <property type="nucleotide sequence ID" value="NC_004722.1"/>
</dbReference>
<dbReference type="RefSeq" id="WP_000526818.1">
    <property type="nucleotide sequence ID" value="NC_004722.1"/>
</dbReference>
<dbReference type="SMR" id="Q81FQ2"/>
<dbReference type="STRING" id="226900.BC_1517"/>
<dbReference type="KEGG" id="bce:BC1517"/>
<dbReference type="PATRIC" id="fig|226900.8.peg.1494"/>
<dbReference type="HOGENOM" id="CLU_001201_0_2_9"/>
<dbReference type="OrthoDB" id="9806583at2"/>
<dbReference type="UniPathway" id="UPA00053">
    <property type="reaction ID" value="UER00085"/>
</dbReference>
<dbReference type="Proteomes" id="UP000001417">
    <property type="component" value="Chromosome"/>
</dbReference>
<dbReference type="GO" id="GO:0005737">
    <property type="term" value="C:cytoplasm"/>
    <property type="evidence" value="ECO:0007669"/>
    <property type="project" value="UniProtKB-SubCell"/>
</dbReference>
<dbReference type="GO" id="GO:0003856">
    <property type="term" value="F:3-dehydroquinate synthase activity"/>
    <property type="evidence" value="ECO:0000318"/>
    <property type="project" value="GO_Central"/>
</dbReference>
<dbReference type="GO" id="GO:0046872">
    <property type="term" value="F:metal ion binding"/>
    <property type="evidence" value="ECO:0007669"/>
    <property type="project" value="UniProtKB-KW"/>
</dbReference>
<dbReference type="GO" id="GO:0000166">
    <property type="term" value="F:nucleotide binding"/>
    <property type="evidence" value="ECO:0007669"/>
    <property type="project" value="UniProtKB-KW"/>
</dbReference>
<dbReference type="GO" id="GO:0008652">
    <property type="term" value="P:amino acid biosynthetic process"/>
    <property type="evidence" value="ECO:0007669"/>
    <property type="project" value="UniProtKB-KW"/>
</dbReference>
<dbReference type="GO" id="GO:0009073">
    <property type="term" value="P:aromatic amino acid family biosynthetic process"/>
    <property type="evidence" value="ECO:0000318"/>
    <property type="project" value="GO_Central"/>
</dbReference>
<dbReference type="GO" id="GO:0009423">
    <property type="term" value="P:chorismate biosynthetic process"/>
    <property type="evidence" value="ECO:0007669"/>
    <property type="project" value="UniProtKB-UniRule"/>
</dbReference>
<dbReference type="CDD" id="cd08195">
    <property type="entry name" value="DHQS"/>
    <property type="match status" value="1"/>
</dbReference>
<dbReference type="FunFam" id="3.40.50.1970:FF:000001">
    <property type="entry name" value="3-dehydroquinate synthase"/>
    <property type="match status" value="1"/>
</dbReference>
<dbReference type="Gene3D" id="3.40.50.1970">
    <property type="match status" value="1"/>
</dbReference>
<dbReference type="Gene3D" id="1.20.1090.10">
    <property type="entry name" value="Dehydroquinate synthase-like - alpha domain"/>
    <property type="match status" value="1"/>
</dbReference>
<dbReference type="HAMAP" id="MF_00110">
    <property type="entry name" value="DHQ_synthase"/>
    <property type="match status" value="1"/>
</dbReference>
<dbReference type="InterPro" id="IPR050071">
    <property type="entry name" value="Dehydroquinate_synthase"/>
</dbReference>
<dbReference type="InterPro" id="IPR016037">
    <property type="entry name" value="DHQ_synth_AroB"/>
</dbReference>
<dbReference type="InterPro" id="IPR030963">
    <property type="entry name" value="DHQ_synth_fam"/>
</dbReference>
<dbReference type="InterPro" id="IPR030960">
    <property type="entry name" value="DHQS/DOIS_N"/>
</dbReference>
<dbReference type="InterPro" id="IPR056179">
    <property type="entry name" value="DHQS_C"/>
</dbReference>
<dbReference type="NCBIfam" id="TIGR01357">
    <property type="entry name" value="aroB"/>
    <property type="match status" value="1"/>
</dbReference>
<dbReference type="PANTHER" id="PTHR43622">
    <property type="entry name" value="3-DEHYDROQUINATE SYNTHASE"/>
    <property type="match status" value="1"/>
</dbReference>
<dbReference type="PANTHER" id="PTHR43622:SF7">
    <property type="entry name" value="3-DEHYDROQUINATE SYNTHASE, CHLOROPLASTIC"/>
    <property type="match status" value="1"/>
</dbReference>
<dbReference type="Pfam" id="PF01761">
    <property type="entry name" value="DHQ_synthase"/>
    <property type="match status" value="1"/>
</dbReference>
<dbReference type="Pfam" id="PF24621">
    <property type="entry name" value="DHQS_C"/>
    <property type="match status" value="1"/>
</dbReference>
<dbReference type="PIRSF" id="PIRSF001455">
    <property type="entry name" value="DHQ_synth"/>
    <property type="match status" value="1"/>
</dbReference>
<dbReference type="SUPFAM" id="SSF56796">
    <property type="entry name" value="Dehydroquinate synthase-like"/>
    <property type="match status" value="1"/>
</dbReference>
<keyword id="KW-0028">Amino-acid biosynthesis</keyword>
<keyword id="KW-0057">Aromatic amino acid biosynthesis</keyword>
<keyword id="KW-0170">Cobalt</keyword>
<keyword id="KW-0963">Cytoplasm</keyword>
<keyword id="KW-0456">Lyase</keyword>
<keyword id="KW-0479">Metal-binding</keyword>
<keyword id="KW-0520">NAD</keyword>
<keyword id="KW-0547">Nucleotide-binding</keyword>
<keyword id="KW-1185">Reference proteome</keyword>
<keyword id="KW-0862">Zinc</keyword>
<proteinExistence type="inferred from homology"/>
<comment type="function">
    <text evidence="1">Catalyzes the conversion of 3-deoxy-D-arabino-heptulosonate 7-phosphate (DAHP) to dehydroquinate (DHQ).</text>
</comment>
<comment type="catalytic activity">
    <reaction evidence="1">
        <text>7-phospho-2-dehydro-3-deoxy-D-arabino-heptonate = 3-dehydroquinate + phosphate</text>
        <dbReference type="Rhea" id="RHEA:21968"/>
        <dbReference type="ChEBI" id="CHEBI:32364"/>
        <dbReference type="ChEBI" id="CHEBI:43474"/>
        <dbReference type="ChEBI" id="CHEBI:58394"/>
        <dbReference type="EC" id="4.2.3.4"/>
    </reaction>
</comment>
<comment type="cofactor">
    <cofactor evidence="1">
        <name>NAD(+)</name>
        <dbReference type="ChEBI" id="CHEBI:57540"/>
    </cofactor>
</comment>
<comment type="cofactor">
    <cofactor evidence="1">
        <name>Co(2+)</name>
        <dbReference type="ChEBI" id="CHEBI:48828"/>
    </cofactor>
    <cofactor evidence="1">
        <name>Zn(2+)</name>
        <dbReference type="ChEBI" id="CHEBI:29105"/>
    </cofactor>
    <text evidence="1">Binds 1 divalent metal cation per subunit. Can use either Co(2+) or Zn(2+).</text>
</comment>
<comment type="pathway">
    <text evidence="1">Metabolic intermediate biosynthesis; chorismate biosynthesis; chorismate from D-erythrose 4-phosphate and phosphoenolpyruvate: step 2/7.</text>
</comment>
<comment type="subcellular location">
    <subcellularLocation>
        <location evidence="1">Cytoplasm</location>
    </subcellularLocation>
</comment>
<comment type="similarity">
    <text evidence="1">Belongs to the sugar phosphate cyclases superfamily. Dehydroquinate synthase family.</text>
</comment>
<sequence length="361" mass="39974">MGNIHIQTKSKEYDVHVGKEVLSNLTTIVQNMQPAVSNVMIISDEAVASLHLQTVIDALQVEQHVFSFVVPSGEKEKSFENFYAAHTSALENKLDRNSLILALGGGMIGDLAGFVAASFMRGIRFVQVPTTLLAHDSAVGGKVAINHPLGKNMIGAFHQPEAVVYHTPFLQSLPEKEWRSGYAEVIKHALIGDVELYHWLKEEVQTLADLHDEKLIHILTKAIPVKANVVSQDETEKGVRAHLNFGHTLGHALEKELGYGNITHGDGVAVGMLFAIFLSEQVYKVDLAYEDMKQWFLKYGYPKMPGDLNVERIVQLMKQDKKANAGAIHMVLMQEYGVVNVVSISDETVHIALEAFQKDMV</sequence>
<name>AROB_BACCR</name>
<reference key="1">
    <citation type="journal article" date="2003" name="Nature">
        <title>Genome sequence of Bacillus cereus and comparative analysis with Bacillus anthracis.</title>
        <authorList>
            <person name="Ivanova N."/>
            <person name="Sorokin A."/>
            <person name="Anderson I."/>
            <person name="Galleron N."/>
            <person name="Candelon B."/>
            <person name="Kapatral V."/>
            <person name="Bhattacharyya A."/>
            <person name="Reznik G."/>
            <person name="Mikhailova N."/>
            <person name="Lapidus A."/>
            <person name="Chu L."/>
            <person name="Mazur M."/>
            <person name="Goltsman E."/>
            <person name="Larsen N."/>
            <person name="D'Souza M."/>
            <person name="Walunas T."/>
            <person name="Grechkin Y."/>
            <person name="Pusch G."/>
            <person name="Haselkorn R."/>
            <person name="Fonstein M."/>
            <person name="Ehrlich S.D."/>
            <person name="Overbeek R."/>
            <person name="Kyrpides N.C."/>
        </authorList>
    </citation>
    <scope>NUCLEOTIDE SEQUENCE [LARGE SCALE GENOMIC DNA]</scope>
    <source>
        <strain>ATCC 14579 / DSM 31 / CCUG 7414 / JCM 2152 / NBRC 15305 / NCIMB 9373 / NCTC 2599 / NRRL B-3711</strain>
    </source>
</reference>
<feature type="chain" id="PRO_0000140708" description="3-dehydroquinate synthase">
    <location>
        <begin position="1"/>
        <end position="361"/>
    </location>
</feature>
<feature type="binding site" evidence="1">
    <location>
        <begin position="72"/>
        <end position="77"/>
    </location>
    <ligand>
        <name>NAD(+)</name>
        <dbReference type="ChEBI" id="CHEBI:57540"/>
    </ligand>
</feature>
<feature type="binding site" evidence="1">
    <location>
        <begin position="130"/>
        <end position="131"/>
    </location>
    <ligand>
        <name>NAD(+)</name>
        <dbReference type="ChEBI" id="CHEBI:57540"/>
    </ligand>
</feature>
<feature type="binding site" evidence="1">
    <location>
        <position position="142"/>
    </location>
    <ligand>
        <name>NAD(+)</name>
        <dbReference type="ChEBI" id="CHEBI:57540"/>
    </ligand>
</feature>
<feature type="binding site" evidence="1">
    <location>
        <position position="151"/>
    </location>
    <ligand>
        <name>NAD(+)</name>
        <dbReference type="ChEBI" id="CHEBI:57540"/>
    </ligand>
</feature>
<feature type="binding site" evidence="1">
    <location>
        <position position="184"/>
    </location>
    <ligand>
        <name>Zn(2+)</name>
        <dbReference type="ChEBI" id="CHEBI:29105"/>
    </ligand>
</feature>
<feature type="binding site" evidence="1">
    <location>
        <position position="247"/>
    </location>
    <ligand>
        <name>Zn(2+)</name>
        <dbReference type="ChEBI" id="CHEBI:29105"/>
    </ligand>
</feature>
<feature type="binding site" evidence="1">
    <location>
        <position position="264"/>
    </location>
    <ligand>
        <name>Zn(2+)</name>
        <dbReference type="ChEBI" id="CHEBI:29105"/>
    </ligand>
</feature>
<gene>
    <name evidence="1" type="primary">aroB</name>
    <name type="ordered locus">BC_1517</name>
</gene>
<accession>Q81FQ2</accession>
<protein>
    <recommendedName>
        <fullName evidence="1">3-dehydroquinate synthase</fullName>
        <shortName evidence="1">DHQS</shortName>
        <ecNumber evidence="1">4.2.3.4</ecNumber>
    </recommendedName>
</protein>